<keyword id="KW-1185">Reference proteome</keyword>
<keyword id="KW-0833">Ubl conjugation pathway</keyword>
<protein>
    <recommendedName>
        <fullName>Ubiquitin-fold modifier-conjugating enzyme 1</fullName>
    </recommendedName>
    <alternativeName>
        <fullName>Ufm1-conjugating enzyme 1</fullName>
    </alternativeName>
</protein>
<dbReference type="EMBL" id="AE013599">
    <property type="protein sequence ID" value="AAF58080.1"/>
    <property type="molecule type" value="Genomic_DNA"/>
</dbReference>
<dbReference type="EMBL" id="AY061366">
    <property type="protein sequence ID" value="AAL28914.1"/>
    <property type="molecule type" value="mRNA"/>
</dbReference>
<dbReference type="EMBL" id="KX531651">
    <property type="protein sequence ID" value="ANY27461.1"/>
    <property type="molecule type" value="mRNA"/>
</dbReference>
<dbReference type="RefSeq" id="NP_611074.1">
    <property type="nucleotide sequence ID" value="NM_137230.3"/>
</dbReference>
<dbReference type="SMR" id="Q7K1Z5"/>
<dbReference type="BioGRID" id="62488">
    <property type="interactions" value="1"/>
</dbReference>
<dbReference type="FunCoup" id="Q7K1Z5">
    <property type="interactions" value="1553"/>
</dbReference>
<dbReference type="IntAct" id="Q7K1Z5">
    <property type="interactions" value="3"/>
</dbReference>
<dbReference type="STRING" id="7227.FBpp0086402"/>
<dbReference type="PaxDb" id="7227-FBpp0086402"/>
<dbReference type="DNASU" id="36762"/>
<dbReference type="EnsemblMetazoa" id="FBtr0087264">
    <property type="protein sequence ID" value="FBpp0086402"/>
    <property type="gene ID" value="FBgn0034061"/>
</dbReference>
<dbReference type="GeneID" id="36762"/>
<dbReference type="KEGG" id="dme:Dmel_CG8386"/>
<dbReference type="UCSC" id="CG8386-RA">
    <property type="organism name" value="d. melanogaster"/>
</dbReference>
<dbReference type="AGR" id="FB:FBgn0034061"/>
<dbReference type="CTD" id="51506"/>
<dbReference type="FlyBase" id="FBgn0034061">
    <property type="gene designation" value="Ufc1"/>
</dbReference>
<dbReference type="VEuPathDB" id="VectorBase:FBgn0034061"/>
<dbReference type="eggNOG" id="KOG3357">
    <property type="taxonomic scope" value="Eukaryota"/>
</dbReference>
<dbReference type="GeneTree" id="ENSGT00390000008196"/>
<dbReference type="HOGENOM" id="CLU_101170_0_0_1"/>
<dbReference type="InParanoid" id="Q7K1Z5"/>
<dbReference type="OMA" id="LWQKNVP"/>
<dbReference type="OrthoDB" id="10256182at2759"/>
<dbReference type="PhylomeDB" id="Q7K1Z5"/>
<dbReference type="BioGRID-ORCS" id="36762">
    <property type="hits" value="0 hits in 1 CRISPR screen"/>
</dbReference>
<dbReference type="GenomeRNAi" id="36762"/>
<dbReference type="PRO" id="PR:Q7K1Z5"/>
<dbReference type="Proteomes" id="UP000000803">
    <property type="component" value="Chromosome 2R"/>
</dbReference>
<dbReference type="Bgee" id="FBgn0034061">
    <property type="expression patterns" value="Expressed in oviduct (Drosophila) and 160 other cell types or tissues"/>
</dbReference>
<dbReference type="GO" id="GO:0061657">
    <property type="term" value="F:UFM1 conjugating enzyme activity"/>
    <property type="evidence" value="ECO:0000250"/>
    <property type="project" value="FlyBase"/>
</dbReference>
<dbReference type="GO" id="GO:0071568">
    <property type="term" value="F:UFM1 transferase activity"/>
    <property type="evidence" value="ECO:0000318"/>
    <property type="project" value="GO_Central"/>
</dbReference>
<dbReference type="GO" id="GO:0071569">
    <property type="term" value="P:protein ufmylation"/>
    <property type="evidence" value="ECO:0000250"/>
    <property type="project" value="FlyBase"/>
</dbReference>
<dbReference type="GO" id="GO:0034976">
    <property type="term" value="P:response to endoplasmic reticulum stress"/>
    <property type="evidence" value="ECO:0000318"/>
    <property type="project" value="GO_Central"/>
</dbReference>
<dbReference type="GO" id="GO:0061709">
    <property type="term" value="P:reticulophagy"/>
    <property type="evidence" value="ECO:0000318"/>
    <property type="project" value="GO_Central"/>
</dbReference>
<dbReference type="CDD" id="cd11686">
    <property type="entry name" value="UBCc_UFC1"/>
    <property type="match status" value="1"/>
</dbReference>
<dbReference type="FunFam" id="3.10.110.10:FF:000042">
    <property type="entry name" value="Ubiquitin-fold modifier-conjugating enzyme 1"/>
    <property type="match status" value="1"/>
</dbReference>
<dbReference type="Gene3D" id="3.10.110.10">
    <property type="entry name" value="Ubiquitin Conjugating Enzyme"/>
    <property type="match status" value="1"/>
</dbReference>
<dbReference type="InterPro" id="IPR016135">
    <property type="entry name" value="UBQ-conjugating_enzyme/RWD"/>
</dbReference>
<dbReference type="InterPro" id="IPR014806">
    <property type="entry name" value="Ufc1"/>
</dbReference>
<dbReference type="PANTHER" id="PTHR12921">
    <property type="entry name" value="UBIQUITIN-FOLD MODIFIER-CONJUGATING ENZYME 1"/>
    <property type="match status" value="1"/>
</dbReference>
<dbReference type="PANTHER" id="PTHR12921:SF0">
    <property type="entry name" value="UBIQUITIN-FOLD MODIFIER-CONJUGATING ENZYME 1"/>
    <property type="match status" value="1"/>
</dbReference>
<dbReference type="Pfam" id="PF08694">
    <property type="entry name" value="UFC1"/>
    <property type="match status" value="1"/>
</dbReference>
<dbReference type="PIRSF" id="PIRSF008716">
    <property type="entry name" value="DUF1782"/>
    <property type="match status" value="1"/>
</dbReference>
<dbReference type="SUPFAM" id="SSF54495">
    <property type="entry name" value="UBC-like"/>
    <property type="match status" value="1"/>
</dbReference>
<accession>Q7K1Z5</accession>
<accession>A0A1B2AJX6</accession>
<sequence length="164" mass="19004">MVDDSTRKTLSNIPLLQIRAGPREKDVWVQRLKEEYQALIKYVENNKQSGSDWFRLESNKEGTKWFGKCWYMHNLLKYEFDVEFDIPVTYPTTAPEIALPELDGKTAKMYRGGKICLTDHFKPLWARNVPKFGIAHAMALGLAPWLAVEIPDLIEKGIITYKEK</sequence>
<feature type="chain" id="PRO_0000391970" description="Ubiquitin-fold modifier-conjugating enzyme 1">
    <location>
        <begin position="1"/>
        <end position="164"/>
    </location>
</feature>
<feature type="active site" description="Glycyl thioester intermediate" evidence="1">
    <location>
        <position position="116"/>
    </location>
</feature>
<reference key="1">
    <citation type="journal article" date="2000" name="Science">
        <title>The genome sequence of Drosophila melanogaster.</title>
        <authorList>
            <person name="Adams M.D."/>
            <person name="Celniker S.E."/>
            <person name="Holt R.A."/>
            <person name="Evans C.A."/>
            <person name="Gocayne J.D."/>
            <person name="Amanatides P.G."/>
            <person name="Scherer S.E."/>
            <person name="Li P.W."/>
            <person name="Hoskins R.A."/>
            <person name="Galle R.F."/>
            <person name="George R.A."/>
            <person name="Lewis S.E."/>
            <person name="Richards S."/>
            <person name="Ashburner M."/>
            <person name="Henderson S.N."/>
            <person name="Sutton G.G."/>
            <person name="Wortman J.R."/>
            <person name="Yandell M.D."/>
            <person name="Zhang Q."/>
            <person name="Chen L.X."/>
            <person name="Brandon R.C."/>
            <person name="Rogers Y.-H.C."/>
            <person name="Blazej R.G."/>
            <person name="Champe M."/>
            <person name="Pfeiffer B.D."/>
            <person name="Wan K.H."/>
            <person name="Doyle C."/>
            <person name="Baxter E.G."/>
            <person name="Helt G."/>
            <person name="Nelson C.R."/>
            <person name="Miklos G.L.G."/>
            <person name="Abril J.F."/>
            <person name="Agbayani A."/>
            <person name="An H.-J."/>
            <person name="Andrews-Pfannkoch C."/>
            <person name="Baldwin D."/>
            <person name="Ballew R.M."/>
            <person name="Basu A."/>
            <person name="Baxendale J."/>
            <person name="Bayraktaroglu L."/>
            <person name="Beasley E.M."/>
            <person name="Beeson K.Y."/>
            <person name="Benos P.V."/>
            <person name="Berman B.P."/>
            <person name="Bhandari D."/>
            <person name="Bolshakov S."/>
            <person name="Borkova D."/>
            <person name="Botchan M.R."/>
            <person name="Bouck J."/>
            <person name="Brokstein P."/>
            <person name="Brottier P."/>
            <person name="Burtis K.C."/>
            <person name="Busam D.A."/>
            <person name="Butler H."/>
            <person name="Cadieu E."/>
            <person name="Center A."/>
            <person name="Chandra I."/>
            <person name="Cherry J.M."/>
            <person name="Cawley S."/>
            <person name="Dahlke C."/>
            <person name="Davenport L.B."/>
            <person name="Davies P."/>
            <person name="de Pablos B."/>
            <person name="Delcher A."/>
            <person name="Deng Z."/>
            <person name="Mays A.D."/>
            <person name="Dew I."/>
            <person name="Dietz S.M."/>
            <person name="Dodson K."/>
            <person name="Doup L.E."/>
            <person name="Downes M."/>
            <person name="Dugan-Rocha S."/>
            <person name="Dunkov B.C."/>
            <person name="Dunn P."/>
            <person name="Durbin K.J."/>
            <person name="Evangelista C.C."/>
            <person name="Ferraz C."/>
            <person name="Ferriera S."/>
            <person name="Fleischmann W."/>
            <person name="Fosler C."/>
            <person name="Gabrielian A.E."/>
            <person name="Garg N.S."/>
            <person name="Gelbart W.M."/>
            <person name="Glasser K."/>
            <person name="Glodek A."/>
            <person name="Gong F."/>
            <person name="Gorrell J.H."/>
            <person name="Gu Z."/>
            <person name="Guan P."/>
            <person name="Harris M."/>
            <person name="Harris N.L."/>
            <person name="Harvey D.A."/>
            <person name="Heiman T.J."/>
            <person name="Hernandez J.R."/>
            <person name="Houck J."/>
            <person name="Hostin D."/>
            <person name="Houston K.A."/>
            <person name="Howland T.J."/>
            <person name="Wei M.-H."/>
            <person name="Ibegwam C."/>
            <person name="Jalali M."/>
            <person name="Kalush F."/>
            <person name="Karpen G.H."/>
            <person name="Ke Z."/>
            <person name="Kennison J.A."/>
            <person name="Ketchum K.A."/>
            <person name="Kimmel B.E."/>
            <person name="Kodira C.D."/>
            <person name="Kraft C.L."/>
            <person name="Kravitz S."/>
            <person name="Kulp D."/>
            <person name="Lai Z."/>
            <person name="Lasko P."/>
            <person name="Lei Y."/>
            <person name="Levitsky A.A."/>
            <person name="Li J.H."/>
            <person name="Li Z."/>
            <person name="Liang Y."/>
            <person name="Lin X."/>
            <person name="Liu X."/>
            <person name="Mattei B."/>
            <person name="McIntosh T.C."/>
            <person name="McLeod M.P."/>
            <person name="McPherson D."/>
            <person name="Merkulov G."/>
            <person name="Milshina N.V."/>
            <person name="Mobarry C."/>
            <person name="Morris J."/>
            <person name="Moshrefi A."/>
            <person name="Mount S.M."/>
            <person name="Moy M."/>
            <person name="Murphy B."/>
            <person name="Murphy L."/>
            <person name="Muzny D.M."/>
            <person name="Nelson D.L."/>
            <person name="Nelson D.R."/>
            <person name="Nelson K.A."/>
            <person name="Nixon K."/>
            <person name="Nusskern D.R."/>
            <person name="Pacleb J.M."/>
            <person name="Palazzolo M."/>
            <person name="Pittman G.S."/>
            <person name="Pan S."/>
            <person name="Pollard J."/>
            <person name="Puri V."/>
            <person name="Reese M.G."/>
            <person name="Reinert K."/>
            <person name="Remington K."/>
            <person name="Saunders R.D.C."/>
            <person name="Scheeler F."/>
            <person name="Shen H."/>
            <person name="Shue B.C."/>
            <person name="Siden-Kiamos I."/>
            <person name="Simpson M."/>
            <person name="Skupski M.P."/>
            <person name="Smith T.J."/>
            <person name="Spier E."/>
            <person name="Spradling A.C."/>
            <person name="Stapleton M."/>
            <person name="Strong R."/>
            <person name="Sun E."/>
            <person name="Svirskas R."/>
            <person name="Tector C."/>
            <person name="Turner R."/>
            <person name="Venter E."/>
            <person name="Wang A.H."/>
            <person name="Wang X."/>
            <person name="Wang Z.-Y."/>
            <person name="Wassarman D.A."/>
            <person name="Weinstock G.M."/>
            <person name="Weissenbach J."/>
            <person name="Williams S.M."/>
            <person name="Woodage T."/>
            <person name="Worley K.C."/>
            <person name="Wu D."/>
            <person name="Yang S."/>
            <person name="Yao Q.A."/>
            <person name="Ye J."/>
            <person name="Yeh R.-F."/>
            <person name="Zaveri J.S."/>
            <person name="Zhan M."/>
            <person name="Zhang G."/>
            <person name="Zhao Q."/>
            <person name="Zheng L."/>
            <person name="Zheng X.H."/>
            <person name="Zhong F.N."/>
            <person name="Zhong W."/>
            <person name="Zhou X."/>
            <person name="Zhu S.C."/>
            <person name="Zhu X."/>
            <person name="Smith H.O."/>
            <person name="Gibbs R.A."/>
            <person name="Myers E.W."/>
            <person name="Rubin G.M."/>
            <person name="Venter J.C."/>
        </authorList>
    </citation>
    <scope>NUCLEOTIDE SEQUENCE [LARGE SCALE GENOMIC DNA]</scope>
    <source>
        <strain>Berkeley</strain>
    </source>
</reference>
<reference key="2">
    <citation type="journal article" date="2002" name="Genome Biol.">
        <title>Annotation of the Drosophila melanogaster euchromatic genome: a systematic review.</title>
        <authorList>
            <person name="Misra S."/>
            <person name="Crosby M.A."/>
            <person name="Mungall C.J."/>
            <person name="Matthews B.B."/>
            <person name="Campbell K.S."/>
            <person name="Hradecky P."/>
            <person name="Huang Y."/>
            <person name="Kaminker J.S."/>
            <person name="Millburn G.H."/>
            <person name="Prochnik S.E."/>
            <person name="Smith C.D."/>
            <person name="Tupy J.L."/>
            <person name="Whitfield E.J."/>
            <person name="Bayraktaroglu L."/>
            <person name="Berman B.P."/>
            <person name="Bettencourt B.R."/>
            <person name="Celniker S.E."/>
            <person name="de Grey A.D.N.J."/>
            <person name="Drysdale R.A."/>
            <person name="Harris N.L."/>
            <person name="Richter J."/>
            <person name="Russo S."/>
            <person name="Schroeder A.J."/>
            <person name="Shu S.Q."/>
            <person name="Stapleton M."/>
            <person name="Yamada C."/>
            <person name="Ashburner M."/>
            <person name="Gelbart W.M."/>
            <person name="Rubin G.M."/>
            <person name="Lewis S.E."/>
        </authorList>
    </citation>
    <scope>GENOME REANNOTATION</scope>
    <source>
        <strain>Berkeley</strain>
    </source>
</reference>
<reference key="3">
    <citation type="journal article" date="2002" name="Genome Biol.">
        <title>A Drosophila full-length cDNA resource.</title>
        <authorList>
            <person name="Stapleton M."/>
            <person name="Carlson J.W."/>
            <person name="Brokstein P."/>
            <person name="Yu C."/>
            <person name="Champe M."/>
            <person name="George R.A."/>
            <person name="Guarin H."/>
            <person name="Kronmiller B."/>
            <person name="Pacleb J.M."/>
            <person name="Park S."/>
            <person name="Wan K.H."/>
            <person name="Rubin G.M."/>
            <person name="Celniker S.E."/>
        </authorList>
    </citation>
    <scope>NUCLEOTIDE SEQUENCE [LARGE SCALE MRNA]</scope>
    <source>
        <strain>Berkeley</strain>
        <tissue>Embryo</tissue>
    </source>
</reference>
<reference evidence="5" key="4">
    <citation type="submission" date="2016-07" db="EMBL/GenBank/DDBJ databases">
        <authorList>
            <person name="Florea S."/>
            <person name="Webb J.S."/>
            <person name="Jaromczyk J."/>
            <person name="Schardl C.L."/>
        </authorList>
    </citation>
    <scope>NUCLEOTIDE SEQUENCE [LARGE SCALE MRNA]</scope>
    <source>
        <strain evidence="5">Berkeley</strain>
    </source>
</reference>
<reference key="5">
    <citation type="journal article" date="2016" name="PLoS ONE">
        <title>UBA5 mutations cause a new form of autosomal recessive cerebellar ataxia.</title>
        <authorList>
            <person name="Duan R."/>
            <person name="Shi Y."/>
            <person name="Yu L."/>
            <person name="Zhang G."/>
            <person name="Li J."/>
            <person name="Lin Y."/>
            <person name="Guo J."/>
            <person name="Wang J."/>
            <person name="Shen L."/>
            <person name="Jiang H."/>
            <person name="Wang G."/>
            <person name="Tang B."/>
        </authorList>
    </citation>
    <scope>FUNCTION</scope>
    <scope>DISRUPTION PHENOTYPE</scope>
</reference>
<reference key="6">
    <citation type="journal article" date="2023" name="Cell. Mol. Life Sci.">
        <title>A neuroprotective role of Ufmylation through Atg9 in the aging brain of Drosophila.</title>
        <authorList>
            <person name="Li H."/>
            <person name="Yu Z."/>
            <person name="Niu Z."/>
            <person name="Cheng Y."/>
            <person name="Wei Z."/>
            <person name="Cai Y."/>
            <person name="Ma F."/>
            <person name="Hu L."/>
            <person name="Zhu J."/>
            <person name="Zhang W."/>
        </authorList>
    </citation>
    <scope>DEVELOPMENTAL STAGE</scope>
</reference>
<organism>
    <name type="scientific">Drosophila melanogaster</name>
    <name type="common">Fruit fly</name>
    <dbReference type="NCBI Taxonomy" id="7227"/>
    <lineage>
        <taxon>Eukaryota</taxon>
        <taxon>Metazoa</taxon>
        <taxon>Ecdysozoa</taxon>
        <taxon>Arthropoda</taxon>
        <taxon>Hexapoda</taxon>
        <taxon>Insecta</taxon>
        <taxon>Pterygota</taxon>
        <taxon>Neoptera</taxon>
        <taxon>Endopterygota</taxon>
        <taxon>Diptera</taxon>
        <taxon>Brachycera</taxon>
        <taxon>Muscomorpha</taxon>
        <taxon>Ephydroidea</taxon>
        <taxon>Drosophilidae</taxon>
        <taxon>Drosophila</taxon>
        <taxon>Sophophora</taxon>
    </lineage>
</organism>
<evidence type="ECO:0000250" key="1">
    <source>
        <dbReference type="UniProtKB" id="Q9Y3C8"/>
    </source>
</evidence>
<evidence type="ECO:0000269" key="2">
    <source>
    </source>
</evidence>
<evidence type="ECO:0000269" key="3">
    <source>
    </source>
</evidence>
<evidence type="ECO:0000305" key="4"/>
<evidence type="ECO:0000312" key="5">
    <source>
        <dbReference type="EMBL" id="ANY27461.1"/>
    </source>
</evidence>
<evidence type="ECO:0000312" key="6">
    <source>
        <dbReference type="FlyBase" id="FBgn0034061"/>
    </source>
</evidence>
<comment type="function">
    <text evidence="1 2">E2-like enzyme which forms an intermediate with UFM1 via a thioester linkage (By similarity). As part of Ufm1 cascade, might play a role in the development of the neuromuscular junctions (PubMed:26872069).</text>
</comment>
<comment type="subunit">
    <text evidence="1">Interacts with Uba5 (via C-terminus). Interacts with Ufl1.</text>
</comment>
<comment type="developmental stage">
    <text evidence="3">Expression in the adult brain declines with age.</text>
</comment>
<comment type="disruption phenotype">
    <text evidence="2">RNAi-mediated knockdown shows aberrant neuromuscular junctions in the larval muscle, and abnormal wings together with locomotive defects in the adult.</text>
</comment>
<comment type="similarity">
    <text evidence="4">Belongs to the ubiquitin-conjugating enzyme family. UFC1 subfamily.</text>
</comment>
<gene>
    <name evidence="6" type="primary">Ufc1</name>
    <name evidence="6" type="ORF">CG8386</name>
</gene>
<name>UFC1_DROME</name>
<proteinExistence type="evidence at transcript level"/>